<organism>
    <name type="scientific">Caenorhabditis elegans</name>
    <dbReference type="NCBI Taxonomy" id="6239"/>
    <lineage>
        <taxon>Eukaryota</taxon>
        <taxon>Metazoa</taxon>
        <taxon>Ecdysozoa</taxon>
        <taxon>Nematoda</taxon>
        <taxon>Chromadorea</taxon>
        <taxon>Rhabditida</taxon>
        <taxon>Rhabditina</taxon>
        <taxon>Rhabditomorpha</taxon>
        <taxon>Rhabditoidea</taxon>
        <taxon>Rhabditidae</taxon>
        <taxon>Peloderinae</taxon>
        <taxon>Caenorhabditis</taxon>
    </lineage>
</organism>
<dbReference type="EMBL" id="FO080436">
    <property type="protein sequence ID" value="CCD63684.1"/>
    <property type="molecule type" value="Genomic_DNA"/>
</dbReference>
<dbReference type="EMBL" id="FO080436">
    <property type="protein sequence ID" value="CCD63685.1"/>
    <property type="molecule type" value="Genomic_DNA"/>
</dbReference>
<dbReference type="PIR" id="T25950">
    <property type="entry name" value="T25950"/>
</dbReference>
<dbReference type="RefSeq" id="NP_001022490.1">
    <molecule id="P91535-2"/>
    <property type="nucleotide sequence ID" value="NM_001027319.3"/>
</dbReference>
<dbReference type="RefSeq" id="NP_001022491.1">
    <molecule id="P91535-1"/>
    <property type="nucleotide sequence ID" value="NM_001027320.1"/>
</dbReference>
<dbReference type="SMR" id="P91535"/>
<dbReference type="FunCoup" id="P91535">
    <property type="interactions" value="1"/>
</dbReference>
<dbReference type="STRING" id="6239.ZC204.4b.1"/>
<dbReference type="PaxDb" id="6239-ZC204.4b"/>
<dbReference type="EnsemblMetazoa" id="ZC204.4a.1">
    <molecule id="P91535-2"/>
    <property type="protein sequence ID" value="ZC204.4a.1"/>
    <property type="gene ID" value="WBGene00005177"/>
</dbReference>
<dbReference type="EnsemblMetazoa" id="ZC204.4b.1">
    <molecule id="P91535-1"/>
    <property type="protein sequence ID" value="ZC204.4b.1"/>
    <property type="gene ID" value="WBGene00005177"/>
</dbReference>
<dbReference type="GeneID" id="191110"/>
<dbReference type="KEGG" id="cel:CELE_ZC204.4"/>
<dbReference type="UCSC" id="ZC204.4a">
    <molecule id="P91535-1"/>
    <property type="organism name" value="c. elegans"/>
</dbReference>
<dbReference type="AGR" id="WB:WBGene00005177"/>
<dbReference type="CTD" id="191110"/>
<dbReference type="WormBase" id="ZC204.4a">
    <molecule id="P91535-2"/>
    <property type="protein sequence ID" value="CE36350"/>
    <property type="gene ID" value="WBGene00005177"/>
    <property type="gene designation" value="srg-20"/>
</dbReference>
<dbReference type="WormBase" id="ZC204.4b">
    <molecule id="P91535-1"/>
    <property type="protein sequence ID" value="CE33252"/>
    <property type="gene ID" value="WBGene00005177"/>
    <property type="gene designation" value="srg-20"/>
</dbReference>
<dbReference type="eggNOG" id="ENOG502TGR1">
    <property type="taxonomic scope" value="Eukaryota"/>
</dbReference>
<dbReference type="GeneTree" id="ENSGT00970000195841"/>
<dbReference type="InParanoid" id="P91535"/>
<dbReference type="OrthoDB" id="5808804at2759"/>
<dbReference type="PhylomeDB" id="P91535"/>
<dbReference type="PRO" id="PR:P91535"/>
<dbReference type="Proteomes" id="UP000001940">
    <property type="component" value="Chromosome II"/>
</dbReference>
<dbReference type="Bgee" id="WBGene00005177">
    <property type="expression patterns" value="Expressed in embryo"/>
</dbReference>
<dbReference type="GO" id="GO:0016020">
    <property type="term" value="C:membrane"/>
    <property type="evidence" value="ECO:0007669"/>
    <property type="project" value="UniProtKB-SubCell"/>
</dbReference>
<dbReference type="GO" id="GO:0004888">
    <property type="term" value="F:transmembrane signaling receptor activity"/>
    <property type="evidence" value="ECO:0007669"/>
    <property type="project" value="InterPro"/>
</dbReference>
<dbReference type="GO" id="GO:0007606">
    <property type="term" value="P:sensory perception of chemical stimulus"/>
    <property type="evidence" value="ECO:0007669"/>
    <property type="project" value="InterPro"/>
</dbReference>
<dbReference type="Gene3D" id="1.20.1070.10">
    <property type="entry name" value="Rhodopsin 7-helix transmembrane proteins"/>
    <property type="match status" value="1"/>
</dbReference>
<dbReference type="InterPro" id="IPR000609">
    <property type="entry name" value="7TM_GPCR_serpentine_rcpt_Srg"/>
</dbReference>
<dbReference type="InterPro" id="IPR051119">
    <property type="entry name" value="Nematode_SR-like"/>
</dbReference>
<dbReference type="PANTHER" id="PTHR31627">
    <property type="entry name" value="SERPENTINE RECEPTOR CLASS GAMMA-RELATED"/>
    <property type="match status" value="1"/>
</dbReference>
<dbReference type="PANTHER" id="PTHR31627:SF3">
    <property type="entry name" value="SERPENTINE RECEPTOR CLASS GAMMA-RELATED"/>
    <property type="match status" value="1"/>
</dbReference>
<dbReference type="Pfam" id="PF02118">
    <property type="entry name" value="Srg"/>
    <property type="match status" value="1"/>
</dbReference>
<dbReference type="PRINTS" id="PR00698">
    <property type="entry name" value="TMPROTEINSRG"/>
</dbReference>
<accession>P91535</accession>
<accession>Q5DX28</accession>
<comment type="subcellular location">
    <subcellularLocation>
        <location evidence="2">Membrane</location>
        <topology evidence="2">Multi-pass membrane protein</topology>
    </subcellularLocation>
</comment>
<comment type="alternative products">
    <event type="alternative splicing"/>
    <isoform>
        <id>P91535-1</id>
        <name>b</name>
        <sequence type="displayed"/>
    </isoform>
    <isoform>
        <id>P91535-2</id>
        <name>a</name>
        <sequence type="described" ref="VSP_020532"/>
    </isoform>
</comment>
<comment type="similarity">
    <text evidence="2">Belongs to the nematode receptor-like protein srg family.</text>
</comment>
<protein>
    <recommendedName>
        <fullName>Serpentine receptor class gamma-20</fullName>
        <shortName>Protein srg-20</shortName>
    </recommendedName>
</protein>
<gene>
    <name type="primary">srg-20</name>
    <name type="ORF">ZC204.4</name>
</gene>
<reference key="1">
    <citation type="journal article" date="1998" name="Science">
        <title>Genome sequence of the nematode C. elegans: a platform for investigating biology.</title>
        <authorList>
            <consortium name="The C. elegans sequencing consortium"/>
        </authorList>
    </citation>
    <scope>NUCLEOTIDE SEQUENCE [LARGE SCALE GENOMIC DNA]</scope>
    <scope>ALTERNATIVE SPLICING</scope>
    <source>
        <strain>Bristol N2</strain>
    </source>
</reference>
<evidence type="ECO:0000255" key="1"/>
<evidence type="ECO:0000305" key="2"/>
<keyword id="KW-0025">Alternative splicing</keyword>
<keyword id="KW-0472">Membrane</keyword>
<keyword id="KW-1185">Reference proteome</keyword>
<keyword id="KW-0812">Transmembrane</keyword>
<keyword id="KW-1133">Transmembrane helix</keyword>
<sequence>MSTRLIIPANFSYDDPLPFTCNQDSHVMLSILEYLVQATYLSVSAVLNSMIVYTIFRCKGKHSYRRNPFFVLYAAEAVMNVYSCVIEVLFGRLIIYMTPLCPALSPFFFTPSILTKLYFLLNHYCLAFKTLSQIAISFNRMTCVIFPVHHFKLWQNILAPVLVSLFVLPLGVTWNILVSRVYVNPNGAGFSVNYRDAVAWANISFLHLFHCIPCLFLMIVFFLASIFGLTMLENRLRSAERSLIIFTMTLGVETMLFAIAQIYFAFLAGYLPGIRPLMLLISFNVFDVLYVYSPIALILMNRQLRRDIFHLKGDDPGFGFTKFPVILVEMISDSSPHLLIINLQLV</sequence>
<feature type="chain" id="PRO_0000104567" description="Serpentine receptor class gamma-20">
    <location>
        <begin position="1"/>
        <end position="346"/>
    </location>
</feature>
<feature type="transmembrane region" description="Helical" evidence="1">
    <location>
        <begin position="27"/>
        <end position="47"/>
    </location>
</feature>
<feature type="transmembrane region" description="Helical" evidence="1">
    <location>
        <begin position="69"/>
        <end position="89"/>
    </location>
</feature>
<feature type="transmembrane region" description="Helical" evidence="1">
    <location>
        <begin position="106"/>
        <end position="128"/>
    </location>
</feature>
<feature type="transmembrane region" description="Helical" evidence="1">
    <location>
        <begin position="157"/>
        <end position="177"/>
    </location>
</feature>
<feature type="transmembrane region" description="Helical" evidence="1">
    <location>
        <begin position="212"/>
        <end position="232"/>
    </location>
</feature>
<feature type="transmembrane region" description="Helical" evidence="1">
    <location>
        <begin position="254"/>
        <end position="274"/>
    </location>
</feature>
<feature type="transmembrane region" description="Helical" evidence="1">
    <location>
        <begin position="279"/>
        <end position="299"/>
    </location>
</feature>
<feature type="splice variant" id="VSP_020532" description="In isoform a." evidence="2">
    <original>GFTKFPVILVEMISDSSPHLLIINLQLV</original>
    <variation>LSASSHNQPAARVMAPVMH</variation>
    <location>
        <begin position="319"/>
        <end position="346"/>
    </location>
</feature>
<proteinExistence type="inferred from homology"/>
<name>SRG20_CAEEL</name>